<accession>B1KFU3</accession>
<name>SLYX_SHEWM</name>
<protein>
    <recommendedName>
        <fullName evidence="1">Protein SlyX homolog</fullName>
    </recommendedName>
</protein>
<organism>
    <name type="scientific">Shewanella woodyi (strain ATCC 51908 / MS32)</name>
    <dbReference type="NCBI Taxonomy" id="392500"/>
    <lineage>
        <taxon>Bacteria</taxon>
        <taxon>Pseudomonadati</taxon>
        <taxon>Pseudomonadota</taxon>
        <taxon>Gammaproteobacteria</taxon>
        <taxon>Alteromonadales</taxon>
        <taxon>Shewanellaceae</taxon>
        <taxon>Shewanella</taxon>
    </lineage>
</organism>
<feature type="chain" id="PRO_1000195857" description="Protein SlyX homolog">
    <location>
        <begin position="1"/>
        <end position="70"/>
    </location>
</feature>
<sequence>MEQLAQRVEDLEMKLAFQESTIDVLDQQVIKLNDLLAEQQHQLRVLISKLQSVEPSNMATQAEETPPPHY</sequence>
<keyword id="KW-1185">Reference proteome</keyword>
<reference key="1">
    <citation type="submission" date="2008-02" db="EMBL/GenBank/DDBJ databases">
        <title>Complete sequence of Shewanella woodyi ATCC 51908.</title>
        <authorList>
            <consortium name="US DOE Joint Genome Institute"/>
            <person name="Copeland A."/>
            <person name="Lucas S."/>
            <person name="Lapidus A."/>
            <person name="Glavina del Rio T."/>
            <person name="Dalin E."/>
            <person name="Tice H."/>
            <person name="Bruce D."/>
            <person name="Goodwin L."/>
            <person name="Pitluck S."/>
            <person name="Sims D."/>
            <person name="Brettin T."/>
            <person name="Detter J.C."/>
            <person name="Han C."/>
            <person name="Kuske C.R."/>
            <person name="Schmutz J."/>
            <person name="Larimer F."/>
            <person name="Land M."/>
            <person name="Hauser L."/>
            <person name="Kyrpides N."/>
            <person name="Lykidis A."/>
            <person name="Zhao J.-S."/>
            <person name="Richardson P."/>
        </authorList>
    </citation>
    <scope>NUCLEOTIDE SEQUENCE [LARGE SCALE GENOMIC DNA]</scope>
    <source>
        <strain>ATCC 51908 / MS32</strain>
    </source>
</reference>
<proteinExistence type="inferred from homology"/>
<comment type="similarity">
    <text evidence="1">Belongs to the SlyX family.</text>
</comment>
<gene>
    <name evidence="1" type="primary">slyX</name>
    <name type="ordered locus">Swoo_0966</name>
</gene>
<dbReference type="EMBL" id="CP000961">
    <property type="protein sequence ID" value="ACA85259.1"/>
    <property type="molecule type" value="Genomic_DNA"/>
</dbReference>
<dbReference type="RefSeq" id="WP_012323606.1">
    <property type="nucleotide sequence ID" value="NC_010506.1"/>
</dbReference>
<dbReference type="SMR" id="B1KFU3"/>
<dbReference type="STRING" id="392500.Swoo_0966"/>
<dbReference type="KEGG" id="swd:Swoo_0966"/>
<dbReference type="eggNOG" id="COG2900">
    <property type="taxonomic scope" value="Bacteria"/>
</dbReference>
<dbReference type="HOGENOM" id="CLU_180796_4_0_6"/>
<dbReference type="Proteomes" id="UP000002168">
    <property type="component" value="Chromosome"/>
</dbReference>
<dbReference type="Gene3D" id="1.20.5.300">
    <property type="match status" value="1"/>
</dbReference>
<dbReference type="HAMAP" id="MF_00715">
    <property type="entry name" value="SlyX"/>
    <property type="match status" value="1"/>
</dbReference>
<dbReference type="InterPro" id="IPR007236">
    <property type="entry name" value="SlyX"/>
</dbReference>
<dbReference type="PANTHER" id="PTHR36508">
    <property type="entry name" value="PROTEIN SLYX"/>
    <property type="match status" value="1"/>
</dbReference>
<dbReference type="PANTHER" id="PTHR36508:SF1">
    <property type="entry name" value="PROTEIN SLYX"/>
    <property type="match status" value="1"/>
</dbReference>
<dbReference type="Pfam" id="PF04102">
    <property type="entry name" value="SlyX"/>
    <property type="match status" value="1"/>
</dbReference>
<evidence type="ECO:0000255" key="1">
    <source>
        <dbReference type="HAMAP-Rule" id="MF_00715"/>
    </source>
</evidence>